<proteinExistence type="inferred from homology"/>
<name>QUEA_STAAM</name>
<keyword id="KW-0963">Cytoplasm</keyword>
<keyword id="KW-0671">Queuosine biosynthesis</keyword>
<keyword id="KW-0949">S-adenosyl-L-methionine</keyword>
<keyword id="KW-0808">Transferase</keyword>
<feature type="chain" id="PRO_0000165439" description="S-adenosylmethionine:tRNA ribosyltransferase-isomerase">
    <location>
        <begin position="1"/>
        <end position="341"/>
    </location>
</feature>
<dbReference type="EC" id="2.4.99.17" evidence="1"/>
<dbReference type="EMBL" id="BA000017">
    <property type="protein sequence ID" value="BAB57802.1"/>
    <property type="molecule type" value="Genomic_DNA"/>
</dbReference>
<dbReference type="RefSeq" id="WP_001019178.1">
    <property type="nucleotide sequence ID" value="NC_002758.2"/>
</dbReference>
<dbReference type="SMR" id="P65950"/>
<dbReference type="KEGG" id="sav:SAV1640"/>
<dbReference type="HOGENOM" id="CLU_039110_1_0_9"/>
<dbReference type="PhylomeDB" id="P65950"/>
<dbReference type="UniPathway" id="UPA00392"/>
<dbReference type="Proteomes" id="UP000002481">
    <property type="component" value="Chromosome"/>
</dbReference>
<dbReference type="GO" id="GO:0005737">
    <property type="term" value="C:cytoplasm"/>
    <property type="evidence" value="ECO:0007669"/>
    <property type="project" value="UniProtKB-SubCell"/>
</dbReference>
<dbReference type="GO" id="GO:0051075">
    <property type="term" value="F:S-adenosylmethionine:tRNA ribosyltransferase-isomerase activity"/>
    <property type="evidence" value="ECO:0007669"/>
    <property type="project" value="UniProtKB-EC"/>
</dbReference>
<dbReference type="GO" id="GO:0008616">
    <property type="term" value="P:queuosine biosynthetic process"/>
    <property type="evidence" value="ECO:0007669"/>
    <property type="project" value="UniProtKB-UniRule"/>
</dbReference>
<dbReference type="GO" id="GO:0002099">
    <property type="term" value="P:tRNA wobble guanine modification"/>
    <property type="evidence" value="ECO:0007669"/>
    <property type="project" value="TreeGrafter"/>
</dbReference>
<dbReference type="FunFam" id="2.40.10.240:FF:000002">
    <property type="entry name" value="S-adenosylmethionine:tRNA ribosyltransferase-isomerase"/>
    <property type="match status" value="1"/>
</dbReference>
<dbReference type="FunFam" id="3.40.1780.10:FF:000001">
    <property type="entry name" value="S-adenosylmethionine:tRNA ribosyltransferase-isomerase"/>
    <property type="match status" value="1"/>
</dbReference>
<dbReference type="Gene3D" id="2.40.10.240">
    <property type="entry name" value="QueA-like"/>
    <property type="match status" value="1"/>
</dbReference>
<dbReference type="Gene3D" id="3.40.1780.10">
    <property type="entry name" value="QueA-like"/>
    <property type="match status" value="1"/>
</dbReference>
<dbReference type="HAMAP" id="MF_00113">
    <property type="entry name" value="QueA"/>
    <property type="match status" value="1"/>
</dbReference>
<dbReference type="InterPro" id="IPR003699">
    <property type="entry name" value="QueA"/>
</dbReference>
<dbReference type="InterPro" id="IPR042118">
    <property type="entry name" value="QueA_dom1"/>
</dbReference>
<dbReference type="InterPro" id="IPR042119">
    <property type="entry name" value="QueA_dom2"/>
</dbReference>
<dbReference type="InterPro" id="IPR036100">
    <property type="entry name" value="QueA_sf"/>
</dbReference>
<dbReference type="NCBIfam" id="NF001140">
    <property type="entry name" value="PRK00147.1"/>
    <property type="match status" value="1"/>
</dbReference>
<dbReference type="NCBIfam" id="TIGR00113">
    <property type="entry name" value="queA"/>
    <property type="match status" value="1"/>
</dbReference>
<dbReference type="PANTHER" id="PTHR30307">
    <property type="entry name" value="S-ADENOSYLMETHIONINE:TRNA RIBOSYLTRANSFERASE-ISOMERASE"/>
    <property type="match status" value="1"/>
</dbReference>
<dbReference type="PANTHER" id="PTHR30307:SF0">
    <property type="entry name" value="S-ADENOSYLMETHIONINE:TRNA RIBOSYLTRANSFERASE-ISOMERASE"/>
    <property type="match status" value="1"/>
</dbReference>
<dbReference type="Pfam" id="PF02547">
    <property type="entry name" value="Queuosine_synth"/>
    <property type="match status" value="1"/>
</dbReference>
<dbReference type="SUPFAM" id="SSF111337">
    <property type="entry name" value="QueA-like"/>
    <property type="match status" value="1"/>
</dbReference>
<reference key="1">
    <citation type="journal article" date="2001" name="Lancet">
        <title>Whole genome sequencing of meticillin-resistant Staphylococcus aureus.</title>
        <authorList>
            <person name="Kuroda M."/>
            <person name="Ohta T."/>
            <person name="Uchiyama I."/>
            <person name="Baba T."/>
            <person name="Yuzawa H."/>
            <person name="Kobayashi I."/>
            <person name="Cui L."/>
            <person name="Oguchi A."/>
            <person name="Aoki K."/>
            <person name="Nagai Y."/>
            <person name="Lian J.-Q."/>
            <person name="Ito T."/>
            <person name="Kanamori M."/>
            <person name="Matsumaru H."/>
            <person name="Maruyama A."/>
            <person name="Murakami H."/>
            <person name="Hosoyama A."/>
            <person name="Mizutani-Ui Y."/>
            <person name="Takahashi N.K."/>
            <person name="Sawano T."/>
            <person name="Inoue R."/>
            <person name="Kaito C."/>
            <person name="Sekimizu K."/>
            <person name="Hirakawa H."/>
            <person name="Kuhara S."/>
            <person name="Goto S."/>
            <person name="Yabuzaki J."/>
            <person name="Kanehisa M."/>
            <person name="Yamashita A."/>
            <person name="Oshima K."/>
            <person name="Furuya K."/>
            <person name="Yoshino C."/>
            <person name="Shiba T."/>
            <person name="Hattori M."/>
            <person name="Ogasawara N."/>
            <person name="Hayashi H."/>
            <person name="Hiramatsu K."/>
        </authorList>
    </citation>
    <scope>NUCLEOTIDE SEQUENCE [LARGE SCALE GENOMIC DNA]</scope>
    <source>
        <strain>Mu50 / ATCC 700699</strain>
    </source>
</reference>
<accession>P65950</accession>
<accession>Q99TL3</accession>
<comment type="function">
    <text evidence="1">Transfers and isomerizes the ribose moiety from AdoMet to the 7-aminomethyl group of 7-deazaguanine (preQ1-tRNA) to give epoxyqueuosine (oQ-tRNA).</text>
</comment>
<comment type="catalytic activity">
    <reaction evidence="1">
        <text>7-aminomethyl-7-carbaguanosine(34) in tRNA + S-adenosyl-L-methionine = epoxyqueuosine(34) in tRNA + adenine + L-methionine + 2 H(+)</text>
        <dbReference type="Rhea" id="RHEA:32155"/>
        <dbReference type="Rhea" id="RHEA-COMP:10342"/>
        <dbReference type="Rhea" id="RHEA-COMP:18582"/>
        <dbReference type="ChEBI" id="CHEBI:15378"/>
        <dbReference type="ChEBI" id="CHEBI:16708"/>
        <dbReference type="ChEBI" id="CHEBI:57844"/>
        <dbReference type="ChEBI" id="CHEBI:59789"/>
        <dbReference type="ChEBI" id="CHEBI:82833"/>
        <dbReference type="ChEBI" id="CHEBI:194443"/>
        <dbReference type="EC" id="2.4.99.17"/>
    </reaction>
</comment>
<comment type="pathway">
    <text evidence="1">tRNA modification; tRNA-queuosine biosynthesis.</text>
</comment>
<comment type="subunit">
    <text evidence="1">Monomer.</text>
</comment>
<comment type="subcellular location">
    <subcellularLocation>
        <location evidence="1">Cytoplasm</location>
    </subcellularLocation>
</comment>
<comment type="similarity">
    <text evidence="1">Belongs to the QueA family.</text>
</comment>
<organism>
    <name type="scientific">Staphylococcus aureus (strain Mu50 / ATCC 700699)</name>
    <dbReference type="NCBI Taxonomy" id="158878"/>
    <lineage>
        <taxon>Bacteria</taxon>
        <taxon>Bacillati</taxon>
        <taxon>Bacillota</taxon>
        <taxon>Bacilli</taxon>
        <taxon>Bacillales</taxon>
        <taxon>Staphylococcaceae</taxon>
        <taxon>Staphylococcus</taxon>
    </lineage>
</organism>
<sequence>MNIEEFDYDLPESLIAQTPLKDRDHSRLLVMDRETGEMKHLHFKDIIEYFRPGDTLVLNDTRVMPARLFGLKEETGAKVEMLMLTQIEGNDWEVLLKPAKRIKVGNKLNFGNGKIIAECIKEMDQGGRIMRLHYEGILQERLDELGEMPLPPYIKERLDDPDRYQTVYAKESGSAAAPTAGLHFTDELLTEIKNKGVNIAFVTLHVGLGTFRPVSVDDVNDHEMHSEYYQMTQETADLLNDTKSKGHRIISVGTTSTRTLETIRRDHDKFVETSGWTNIFIYPGFDFKAIDGQITNFHLPKSTLVMLVSAFSTRENVLNAYKTAVNLEYRFFSFGDAMLII</sequence>
<gene>
    <name evidence="1" type="primary">queA</name>
    <name type="ordered locus">SAV1640</name>
</gene>
<protein>
    <recommendedName>
        <fullName evidence="1">S-adenosylmethionine:tRNA ribosyltransferase-isomerase</fullName>
        <ecNumber evidence="1">2.4.99.17</ecNumber>
    </recommendedName>
    <alternativeName>
        <fullName evidence="1">Queuosine biosynthesis protein QueA</fullName>
    </alternativeName>
</protein>
<evidence type="ECO:0000255" key="1">
    <source>
        <dbReference type="HAMAP-Rule" id="MF_00113"/>
    </source>
</evidence>